<organismHost>
    <name type="scientific">Vertebrata</name>
    <dbReference type="NCBI Taxonomy" id="7742"/>
</organismHost>
<sequence length="256" mass="28913">MFGNTTISKMLLDYGARIDSRNKEECLPLNHAIATNNKELTSLFLARGADTNIVDKYNRSVLHKAIGNNNITSVKLLLNHGIDYNLRDNHGYTALHYAITLQNREITDMLLSSGADPNIMNNEKHTPLYHALLYRSSNVESLILHGADINIVDDTGKTPLSNTYIDIIDNKNIEVIVSQFTILEYIAPDDIKNQLGYKINTDLINNNKRYSTIKQKCVHEINLLKAIKFHSGYSAEIFLIKSKSNIFHNSQGIQIL</sequence>
<name>V231_FOWPN</name>
<gene>
    <name type="ordered locus">FPV231</name>
</gene>
<protein>
    <recommendedName>
        <fullName>Putative ankyrin repeat protein FPV231</fullName>
    </recommendedName>
</protein>
<dbReference type="EMBL" id="AF198100">
    <property type="protein sequence ID" value="AAF44575.1"/>
    <property type="molecule type" value="Genomic_DNA"/>
</dbReference>
<dbReference type="RefSeq" id="NP_039194.1">
    <property type="nucleotide sequence ID" value="NC_002188.1"/>
</dbReference>
<dbReference type="SMR" id="Q9J504"/>
<dbReference type="GeneID" id="1486803"/>
<dbReference type="KEGG" id="vg:1486803"/>
<dbReference type="Proteomes" id="UP000008597">
    <property type="component" value="Segment"/>
</dbReference>
<dbReference type="GO" id="GO:0045732">
    <property type="term" value="P:positive regulation of protein catabolic process"/>
    <property type="evidence" value="ECO:0007669"/>
    <property type="project" value="TreeGrafter"/>
</dbReference>
<dbReference type="GO" id="GO:0016567">
    <property type="term" value="P:protein ubiquitination"/>
    <property type="evidence" value="ECO:0007669"/>
    <property type="project" value="TreeGrafter"/>
</dbReference>
<dbReference type="Gene3D" id="1.25.40.20">
    <property type="entry name" value="Ankyrin repeat-containing domain"/>
    <property type="match status" value="1"/>
</dbReference>
<dbReference type="InterPro" id="IPR051573">
    <property type="entry name" value="Ankyrin-SOCS_box_domain"/>
</dbReference>
<dbReference type="InterPro" id="IPR002110">
    <property type="entry name" value="Ankyrin_rpt"/>
</dbReference>
<dbReference type="InterPro" id="IPR036770">
    <property type="entry name" value="Ankyrin_rpt-contain_sf"/>
</dbReference>
<dbReference type="PANTHER" id="PTHR24136:SF15">
    <property type="entry name" value="ANK_REP_REGION DOMAIN-CONTAINING PROTEIN"/>
    <property type="match status" value="1"/>
</dbReference>
<dbReference type="PANTHER" id="PTHR24136">
    <property type="entry name" value="SOWAH (DROSOPHILA) HOMOLOG"/>
    <property type="match status" value="1"/>
</dbReference>
<dbReference type="Pfam" id="PF00023">
    <property type="entry name" value="Ank"/>
    <property type="match status" value="1"/>
</dbReference>
<dbReference type="Pfam" id="PF12796">
    <property type="entry name" value="Ank_2"/>
    <property type="match status" value="1"/>
</dbReference>
<dbReference type="SMART" id="SM00248">
    <property type="entry name" value="ANK"/>
    <property type="match status" value="4"/>
</dbReference>
<dbReference type="SUPFAM" id="SSF48403">
    <property type="entry name" value="Ankyrin repeat"/>
    <property type="match status" value="1"/>
</dbReference>
<dbReference type="PROSITE" id="PS50297">
    <property type="entry name" value="ANK_REP_REGION"/>
    <property type="match status" value="1"/>
</dbReference>
<dbReference type="PROSITE" id="PS50088">
    <property type="entry name" value="ANK_REPEAT"/>
    <property type="match status" value="3"/>
</dbReference>
<reference key="1">
    <citation type="journal article" date="2000" name="J. Virol.">
        <title>The genome of fowlpox virus.</title>
        <authorList>
            <person name="Afonso C.L."/>
            <person name="Tulman E.R."/>
            <person name="Lu Z."/>
            <person name="Zsak L."/>
            <person name="Kutish G.F."/>
            <person name="Rock D.L."/>
        </authorList>
    </citation>
    <scope>NUCLEOTIDE SEQUENCE [LARGE SCALE GENOMIC DNA]</scope>
</reference>
<keyword id="KW-0040">ANK repeat</keyword>
<keyword id="KW-1185">Reference proteome</keyword>
<keyword id="KW-0677">Repeat</keyword>
<proteinExistence type="predicted"/>
<accession>Q9J504</accession>
<organism>
    <name type="scientific">Fowlpox virus (strain NVSL)</name>
    <name type="common">FPV</name>
    <dbReference type="NCBI Taxonomy" id="928301"/>
    <lineage>
        <taxon>Viruses</taxon>
        <taxon>Varidnaviria</taxon>
        <taxon>Bamfordvirae</taxon>
        <taxon>Nucleocytoviricota</taxon>
        <taxon>Pokkesviricetes</taxon>
        <taxon>Chitovirales</taxon>
        <taxon>Poxviridae</taxon>
        <taxon>Chordopoxvirinae</taxon>
        <taxon>Avipoxvirus</taxon>
        <taxon>Fowlpox virus</taxon>
    </lineage>
</organism>
<feature type="chain" id="PRO_0000067122" description="Putative ankyrin repeat protein FPV231">
    <location>
        <begin position="1"/>
        <end position="256"/>
    </location>
</feature>
<feature type="repeat" description="ANK 1">
    <location>
        <begin position="1"/>
        <end position="20"/>
    </location>
</feature>
<feature type="repeat" description="ANK 2">
    <location>
        <begin position="24"/>
        <end position="53"/>
    </location>
</feature>
<feature type="repeat" description="ANK 3">
    <location>
        <begin position="57"/>
        <end position="86"/>
    </location>
</feature>
<feature type="repeat" description="ANK 4">
    <location>
        <begin position="90"/>
        <end position="119"/>
    </location>
</feature>
<feature type="repeat" description="ANK 5">
    <location>
        <begin position="123"/>
        <end position="151"/>
    </location>
</feature>